<keyword id="KW-0687">Ribonucleoprotein</keyword>
<keyword id="KW-0689">Ribosomal protein</keyword>
<keyword id="KW-0694">RNA-binding</keyword>
<keyword id="KW-0699">rRNA-binding</keyword>
<feature type="chain" id="PRO_1000165988" description="Large ribosomal subunit protein uL4">
    <location>
        <begin position="1"/>
        <end position="218"/>
    </location>
</feature>
<feature type="region of interest" description="Disordered" evidence="2">
    <location>
        <begin position="55"/>
        <end position="83"/>
    </location>
</feature>
<evidence type="ECO:0000255" key="1">
    <source>
        <dbReference type="HAMAP-Rule" id="MF_01328"/>
    </source>
</evidence>
<evidence type="ECO:0000256" key="2">
    <source>
        <dbReference type="SAM" id="MobiDB-lite"/>
    </source>
</evidence>
<evidence type="ECO:0000305" key="3"/>
<name>RL4_BIFLS</name>
<organism>
    <name type="scientific">Bifidobacterium longum subsp. infantis (strain ATCC 15697 / DSM 20088 / JCM 1222 / NCTC 11817 / S12)</name>
    <dbReference type="NCBI Taxonomy" id="391904"/>
    <lineage>
        <taxon>Bacteria</taxon>
        <taxon>Bacillati</taxon>
        <taxon>Actinomycetota</taxon>
        <taxon>Actinomycetes</taxon>
        <taxon>Bifidobacteriales</taxon>
        <taxon>Bifidobacteriaceae</taxon>
        <taxon>Bifidobacterium</taxon>
    </lineage>
</organism>
<protein>
    <recommendedName>
        <fullName evidence="1">Large ribosomal subunit protein uL4</fullName>
    </recommendedName>
    <alternativeName>
        <fullName evidence="3">50S ribosomal protein L4</fullName>
    </alternativeName>
</protein>
<dbReference type="EMBL" id="CP001095">
    <property type="protein sequence ID" value="ACJ53295.1"/>
    <property type="molecule type" value="Genomic_DNA"/>
</dbReference>
<dbReference type="EMBL" id="AP010889">
    <property type="protein sequence ID" value="BAJ69886.1"/>
    <property type="molecule type" value="Genomic_DNA"/>
</dbReference>
<dbReference type="RefSeq" id="WP_007053032.1">
    <property type="nucleotide sequence ID" value="NZ_JDTT01000039.1"/>
</dbReference>
<dbReference type="SMR" id="B7GND9"/>
<dbReference type="GeneID" id="69578896"/>
<dbReference type="KEGG" id="bln:Blon_2236"/>
<dbReference type="KEGG" id="blon:BLIJ_2309"/>
<dbReference type="PATRIC" id="fig|391904.8.peg.2311"/>
<dbReference type="HOGENOM" id="CLU_041575_5_0_11"/>
<dbReference type="Proteomes" id="UP000001360">
    <property type="component" value="Chromosome"/>
</dbReference>
<dbReference type="GO" id="GO:1990904">
    <property type="term" value="C:ribonucleoprotein complex"/>
    <property type="evidence" value="ECO:0007669"/>
    <property type="project" value="UniProtKB-KW"/>
</dbReference>
<dbReference type="GO" id="GO:0005840">
    <property type="term" value="C:ribosome"/>
    <property type="evidence" value="ECO:0007669"/>
    <property type="project" value="UniProtKB-KW"/>
</dbReference>
<dbReference type="GO" id="GO:0019843">
    <property type="term" value="F:rRNA binding"/>
    <property type="evidence" value="ECO:0007669"/>
    <property type="project" value="UniProtKB-UniRule"/>
</dbReference>
<dbReference type="GO" id="GO:0003735">
    <property type="term" value="F:structural constituent of ribosome"/>
    <property type="evidence" value="ECO:0007669"/>
    <property type="project" value="InterPro"/>
</dbReference>
<dbReference type="GO" id="GO:0006412">
    <property type="term" value="P:translation"/>
    <property type="evidence" value="ECO:0007669"/>
    <property type="project" value="UniProtKB-UniRule"/>
</dbReference>
<dbReference type="FunFam" id="3.40.1370.10:FF:000004">
    <property type="entry name" value="50S ribosomal protein L4"/>
    <property type="match status" value="1"/>
</dbReference>
<dbReference type="Gene3D" id="3.40.1370.10">
    <property type="match status" value="1"/>
</dbReference>
<dbReference type="HAMAP" id="MF_01328_B">
    <property type="entry name" value="Ribosomal_uL4_B"/>
    <property type="match status" value="1"/>
</dbReference>
<dbReference type="InterPro" id="IPR002136">
    <property type="entry name" value="Ribosomal_uL4"/>
</dbReference>
<dbReference type="InterPro" id="IPR013005">
    <property type="entry name" value="Ribosomal_uL4-like"/>
</dbReference>
<dbReference type="InterPro" id="IPR023574">
    <property type="entry name" value="Ribosomal_uL4_dom_sf"/>
</dbReference>
<dbReference type="NCBIfam" id="TIGR03953">
    <property type="entry name" value="rplD_bact"/>
    <property type="match status" value="1"/>
</dbReference>
<dbReference type="PANTHER" id="PTHR10746">
    <property type="entry name" value="50S RIBOSOMAL PROTEIN L4"/>
    <property type="match status" value="1"/>
</dbReference>
<dbReference type="PANTHER" id="PTHR10746:SF6">
    <property type="entry name" value="LARGE RIBOSOMAL SUBUNIT PROTEIN UL4M"/>
    <property type="match status" value="1"/>
</dbReference>
<dbReference type="Pfam" id="PF00573">
    <property type="entry name" value="Ribosomal_L4"/>
    <property type="match status" value="1"/>
</dbReference>
<dbReference type="SUPFAM" id="SSF52166">
    <property type="entry name" value="Ribosomal protein L4"/>
    <property type="match status" value="1"/>
</dbReference>
<sequence length="218" mass="23505">MANVTLNVTDAKGQATGTVEAPEALFGVSAEDVQAHIPLIHQVVTAQLAAARQGTHATKTRGMVSGGGKKPWKQKGTGRARQGSIRAPQWYHGGTVFGPQPRDYSQRTPKKMKAAALRYALSDRANAGRVAVVEFGITEPSTKAAVAALAPITADKFTTVVFTRDNINEWLSVRNIPTVHPIFVDQLNTYDVITSQYVVFTKEAFEAFVAAKTEPKEA</sequence>
<accession>B7GND9</accession>
<accession>E8MN83</accession>
<gene>
    <name evidence="1" type="primary">rplD</name>
    <name type="ordered locus">Blon_2236</name>
    <name type="ordered locus">BLIJ_2309</name>
</gene>
<proteinExistence type="inferred from homology"/>
<reference key="1">
    <citation type="journal article" date="2008" name="Proc. Natl. Acad. Sci. U.S.A.">
        <title>The genome sequence of Bifidobacterium longum subsp. infantis reveals adaptations for milk utilization within the infant microbiome.</title>
        <authorList>
            <person name="Sela D.A."/>
            <person name="Chapman J."/>
            <person name="Adeuya A."/>
            <person name="Kim J.H."/>
            <person name="Chen F."/>
            <person name="Whitehead T.R."/>
            <person name="Lapidus A."/>
            <person name="Rokhsar D.S."/>
            <person name="Lebrilla C.B."/>
            <person name="German J.B."/>
            <person name="Price N.P."/>
            <person name="Richardson P.M."/>
            <person name="Mills D.A."/>
        </authorList>
    </citation>
    <scope>NUCLEOTIDE SEQUENCE [LARGE SCALE GENOMIC DNA]</scope>
    <source>
        <strain>ATCC 15697 / DSM 20088 / JCM 1222 / NCTC 11817 / S12</strain>
    </source>
</reference>
<reference key="2">
    <citation type="journal article" date="2011" name="Nature">
        <title>Bifidobacteria can protect from enteropathogenic infection through production of acetate.</title>
        <authorList>
            <person name="Fukuda S."/>
            <person name="Toh H."/>
            <person name="Hase K."/>
            <person name="Oshima K."/>
            <person name="Nakanishi Y."/>
            <person name="Yoshimura K."/>
            <person name="Tobe T."/>
            <person name="Clarke J.M."/>
            <person name="Topping D.L."/>
            <person name="Suzuki T."/>
            <person name="Taylor T.D."/>
            <person name="Itoh K."/>
            <person name="Kikuchi J."/>
            <person name="Morita H."/>
            <person name="Hattori M."/>
            <person name="Ohno H."/>
        </authorList>
    </citation>
    <scope>NUCLEOTIDE SEQUENCE [LARGE SCALE GENOMIC DNA]</scope>
    <source>
        <strain>ATCC 15697 / DSM 20088 / JCM 1222 / NCTC 11817 / S12</strain>
    </source>
</reference>
<comment type="function">
    <text evidence="1">One of the primary rRNA binding proteins, this protein initially binds near the 5'-end of the 23S rRNA. It is important during the early stages of 50S assembly. It makes multiple contacts with different domains of the 23S rRNA in the assembled 50S subunit and ribosome.</text>
</comment>
<comment type="function">
    <text evidence="1">Forms part of the polypeptide exit tunnel.</text>
</comment>
<comment type="subunit">
    <text evidence="1">Part of the 50S ribosomal subunit.</text>
</comment>
<comment type="similarity">
    <text evidence="1">Belongs to the universal ribosomal protein uL4 family.</text>
</comment>